<feature type="chain" id="PRO_1000164039" description="Uncharacterized MFS-type transporter YhhS">
    <location>
        <begin position="1"/>
        <end position="405"/>
    </location>
</feature>
<feature type="transmembrane region" description="Helical" evidence="1">
    <location>
        <begin position="19"/>
        <end position="39"/>
    </location>
</feature>
<feature type="transmembrane region" description="Helical" evidence="1">
    <location>
        <begin position="48"/>
        <end position="68"/>
    </location>
</feature>
<feature type="transmembrane region" description="Helical" evidence="1">
    <location>
        <begin position="85"/>
        <end position="105"/>
    </location>
</feature>
<feature type="transmembrane region" description="Helical" evidence="1">
    <location>
        <begin position="106"/>
        <end position="126"/>
    </location>
</feature>
<feature type="transmembrane region" description="Helical" evidence="1">
    <location>
        <begin position="129"/>
        <end position="149"/>
    </location>
</feature>
<feature type="transmembrane region" description="Helical" evidence="1">
    <location>
        <begin position="156"/>
        <end position="176"/>
    </location>
</feature>
<feature type="transmembrane region" description="Helical" evidence="1">
    <location>
        <begin position="178"/>
        <end position="198"/>
    </location>
</feature>
<feature type="transmembrane region" description="Helical" evidence="1">
    <location>
        <begin position="224"/>
        <end position="244"/>
    </location>
</feature>
<feature type="transmembrane region" description="Helical" evidence="1">
    <location>
        <begin position="252"/>
        <end position="272"/>
    </location>
</feature>
<feature type="transmembrane region" description="Helical" evidence="1">
    <location>
        <begin position="283"/>
        <end position="303"/>
    </location>
</feature>
<feature type="transmembrane region" description="Helical" evidence="1">
    <location>
        <begin position="309"/>
        <end position="329"/>
    </location>
</feature>
<feature type="transmembrane region" description="Helical" evidence="1">
    <location>
        <begin position="344"/>
        <end position="364"/>
    </location>
</feature>
<feature type="transmembrane region" description="Helical" evidence="1">
    <location>
        <begin position="366"/>
        <end position="386"/>
    </location>
</feature>
<name>YHHS_SALPC</name>
<keyword id="KW-0997">Cell inner membrane</keyword>
<keyword id="KW-1003">Cell membrane</keyword>
<keyword id="KW-0472">Membrane</keyword>
<keyword id="KW-0812">Transmembrane</keyword>
<keyword id="KW-1133">Transmembrane helix</keyword>
<keyword id="KW-0813">Transport</keyword>
<accession>C0Q135</accession>
<evidence type="ECO:0000255" key="1">
    <source>
        <dbReference type="HAMAP-Rule" id="MF_01118"/>
    </source>
</evidence>
<comment type="subcellular location">
    <subcellularLocation>
        <location evidence="1">Cell inner membrane</location>
        <topology evidence="1">Multi-pass membrane protein</topology>
    </subcellularLocation>
</comment>
<comment type="similarity">
    <text evidence="1">Belongs to the major facilitator superfamily. YhhS family.</text>
</comment>
<protein>
    <recommendedName>
        <fullName evidence="1">Uncharacterized MFS-type transporter YhhS</fullName>
    </recommendedName>
</protein>
<reference key="1">
    <citation type="journal article" date="2009" name="PLoS ONE">
        <title>Salmonella paratyphi C: genetic divergence from Salmonella choleraesuis and pathogenic convergence with Salmonella typhi.</title>
        <authorList>
            <person name="Liu W.-Q."/>
            <person name="Feng Y."/>
            <person name="Wang Y."/>
            <person name="Zou Q.-H."/>
            <person name="Chen F."/>
            <person name="Guo J.-T."/>
            <person name="Peng Y.-H."/>
            <person name="Jin Y."/>
            <person name="Li Y.-G."/>
            <person name="Hu S.-N."/>
            <person name="Johnston R.N."/>
            <person name="Liu G.-R."/>
            <person name="Liu S.-L."/>
        </authorList>
    </citation>
    <scope>NUCLEOTIDE SEQUENCE [LARGE SCALE GENOMIC DNA]</scope>
    <source>
        <strain>RKS4594</strain>
    </source>
</reference>
<sequence>MPEPVAEPALNGLRLNLRIVSIVMFNFASYLTIGLPLAVLPGYVHDAMGFSAFWAGLIISLQYFATLLSRPHAGRYADVLGPKKIVVFGLCGCFLSGFGYLLADIASAWPMISLLLLGLGRVILGIGQSFAGTGSTLWGVGVVGSLHIGRVISWNGIVTYGAMAMGAPLGVLCYAWGGLQGLALTVMGVALLAILLALPRPSVKANKGKPLPFRAVLGRVWLYGMALALASAGFGVIATFITLFYDAKGWDGAAFALTLFSVAFVGTRLLFPNGINRLGGLNVAMICFGVEIIGLLLVGTAAMPWMAKIGVLLTGMGFSLVFPALGVVAVKAVPPQNQGAALATYTVFMDMSLGVTGPLAGLVMTWAGVPVIYLAAAGLVAMALLLTWRLKKRPPSALPEAASSS</sequence>
<dbReference type="EMBL" id="CP000857">
    <property type="protein sequence ID" value="ACN47731.1"/>
    <property type="molecule type" value="Genomic_DNA"/>
</dbReference>
<dbReference type="SMR" id="C0Q135"/>
<dbReference type="KEGG" id="sei:SPC_3650"/>
<dbReference type="HOGENOM" id="CLU_001265_10_3_6"/>
<dbReference type="Proteomes" id="UP000001599">
    <property type="component" value="Chromosome"/>
</dbReference>
<dbReference type="GO" id="GO:0005886">
    <property type="term" value="C:plasma membrane"/>
    <property type="evidence" value="ECO:0007669"/>
    <property type="project" value="UniProtKB-SubCell"/>
</dbReference>
<dbReference type="GO" id="GO:0022857">
    <property type="term" value="F:transmembrane transporter activity"/>
    <property type="evidence" value="ECO:0007669"/>
    <property type="project" value="UniProtKB-UniRule"/>
</dbReference>
<dbReference type="CDD" id="cd17489">
    <property type="entry name" value="MFS_YfcJ_like"/>
    <property type="match status" value="1"/>
</dbReference>
<dbReference type="FunFam" id="1.20.1250.20:FF:000155">
    <property type="entry name" value="Uncharacterized MFS-type transporter YhhS"/>
    <property type="match status" value="1"/>
</dbReference>
<dbReference type="Gene3D" id="1.20.1250.20">
    <property type="entry name" value="MFS general substrate transporter like domains"/>
    <property type="match status" value="1"/>
</dbReference>
<dbReference type="HAMAP" id="MF_01118">
    <property type="entry name" value="MFS_YhhS"/>
    <property type="match status" value="1"/>
</dbReference>
<dbReference type="InterPro" id="IPR011701">
    <property type="entry name" value="MFS"/>
</dbReference>
<dbReference type="InterPro" id="IPR020846">
    <property type="entry name" value="MFS_dom"/>
</dbReference>
<dbReference type="InterPro" id="IPR036259">
    <property type="entry name" value="MFS_trans_sf"/>
</dbReference>
<dbReference type="InterPro" id="IPR050171">
    <property type="entry name" value="MFS_Transporters"/>
</dbReference>
<dbReference type="InterPro" id="IPR023008">
    <property type="entry name" value="MFS_YhhS-like"/>
</dbReference>
<dbReference type="NCBIfam" id="NF003477">
    <property type="entry name" value="PRK05122.1"/>
    <property type="match status" value="1"/>
</dbReference>
<dbReference type="PANTHER" id="PTHR23517:SF13">
    <property type="entry name" value="MAJOR FACILITATOR SUPERFAMILY MFS_1"/>
    <property type="match status" value="1"/>
</dbReference>
<dbReference type="PANTHER" id="PTHR23517">
    <property type="entry name" value="RESISTANCE PROTEIN MDTM, PUTATIVE-RELATED-RELATED"/>
    <property type="match status" value="1"/>
</dbReference>
<dbReference type="Pfam" id="PF07690">
    <property type="entry name" value="MFS_1"/>
    <property type="match status" value="1"/>
</dbReference>
<dbReference type="SUPFAM" id="SSF103473">
    <property type="entry name" value="MFS general substrate transporter"/>
    <property type="match status" value="1"/>
</dbReference>
<dbReference type="PROSITE" id="PS50850">
    <property type="entry name" value="MFS"/>
    <property type="match status" value="1"/>
</dbReference>
<gene>
    <name type="ordered locus">SPC_3650</name>
</gene>
<proteinExistence type="inferred from homology"/>
<organism>
    <name type="scientific">Salmonella paratyphi C (strain RKS4594)</name>
    <dbReference type="NCBI Taxonomy" id="476213"/>
    <lineage>
        <taxon>Bacteria</taxon>
        <taxon>Pseudomonadati</taxon>
        <taxon>Pseudomonadota</taxon>
        <taxon>Gammaproteobacteria</taxon>
        <taxon>Enterobacterales</taxon>
        <taxon>Enterobacteriaceae</taxon>
        <taxon>Salmonella</taxon>
    </lineage>
</organism>